<dbReference type="EMBL" id="L19932">
    <property type="protein sequence ID" value="AAC37658.1"/>
    <property type="molecule type" value="mRNA"/>
</dbReference>
<dbReference type="EMBL" id="AK084431">
    <property type="protein sequence ID" value="BAC39181.1"/>
    <property type="molecule type" value="mRNA"/>
</dbReference>
<dbReference type="EMBL" id="AK142323">
    <property type="protein sequence ID" value="BAE25032.1"/>
    <property type="molecule type" value="mRNA"/>
</dbReference>
<dbReference type="EMBL" id="AK151680">
    <property type="protein sequence ID" value="BAE30605.1"/>
    <property type="molecule type" value="mRNA"/>
</dbReference>
<dbReference type="EMBL" id="AK152365">
    <property type="protein sequence ID" value="BAE31155.1"/>
    <property type="molecule type" value="mRNA"/>
</dbReference>
<dbReference type="EMBL" id="AK155572">
    <property type="protein sequence ID" value="BAE33330.1"/>
    <property type="molecule type" value="mRNA"/>
</dbReference>
<dbReference type="EMBL" id="AK155828">
    <property type="protein sequence ID" value="BAE33452.1"/>
    <property type="molecule type" value="mRNA"/>
</dbReference>
<dbReference type="EMBL" id="AK170495">
    <property type="protein sequence ID" value="BAE41834.1"/>
    <property type="molecule type" value="mRNA"/>
</dbReference>
<dbReference type="CCDS" id="CCDS36680.1"/>
<dbReference type="RefSeq" id="NP_033395.1">
    <property type="nucleotide sequence ID" value="NM_009369.5"/>
</dbReference>
<dbReference type="SMR" id="P82198"/>
<dbReference type="BioGRID" id="204162">
    <property type="interactions" value="1"/>
</dbReference>
<dbReference type="FunCoup" id="P82198">
    <property type="interactions" value="138"/>
</dbReference>
<dbReference type="STRING" id="10090.ENSMUSP00000037719"/>
<dbReference type="iPTMnet" id="P82198"/>
<dbReference type="PhosphoSitePlus" id="P82198"/>
<dbReference type="CPTAC" id="non-CPTAC-3690"/>
<dbReference type="jPOST" id="P82198"/>
<dbReference type="PaxDb" id="10090-ENSMUSP00000037719"/>
<dbReference type="ProteomicsDB" id="273680"/>
<dbReference type="Antibodypedia" id="1982">
    <property type="antibodies" value="426 antibodies from 40 providers"/>
</dbReference>
<dbReference type="DNASU" id="21810"/>
<dbReference type="Ensembl" id="ENSMUST00000045173.10">
    <property type="protein sequence ID" value="ENSMUSP00000037719.9"/>
    <property type="gene ID" value="ENSMUSG00000035493.11"/>
</dbReference>
<dbReference type="GeneID" id="21810"/>
<dbReference type="KEGG" id="mmu:21810"/>
<dbReference type="UCSC" id="uc011zae.1">
    <property type="organism name" value="mouse"/>
</dbReference>
<dbReference type="AGR" id="MGI:99959"/>
<dbReference type="CTD" id="7045"/>
<dbReference type="MGI" id="MGI:99959">
    <property type="gene designation" value="Tgfbi"/>
</dbReference>
<dbReference type="VEuPathDB" id="HostDB:ENSMUSG00000035493"/>
<dbReference type="eggNOG" id="KOG1437">
    <property type="taxonomic scope" value="Eukaryota"/>
</dbReference>
<dbReference type="GeneTree" id="ENSGT00530000063860"/>
<dbReference type="HOGENOM" id="CLU_017611_1_0_1"/>
<dbReference type="InParanoid" id="P82198"/>
<dbReference type="OMA" id="MYQNIDI"/>
<dbReference type="OrthoDB" id="286301at2759"/>
<dbReference type="PhylomeDB" id="P82198"/>
<dbReference type="TreeFam" id="TF316269"/>
<dbReference type="BioGRID-ORCS" id="21810">
    <property type="hits" value="1 hit in 78 CRISPR screens"/>
</dbReference>
<dbReference type="ChiTaRS" id="Tgfbi">
    <property type="organism name" value="mouse"/>
</dbReference>
<dbReference type="PRO" id="PR:P82198"/>
<dbReference type="Proteomes" id="UP000000589">
    <property type="component" value="Chromosome 13"/>
</dbReference>
<dbReference type="RNAct" id="P82198">
    <property type="molecule type" value="protein"/>
</dbReference>
<dbReference type="Bgee" id="ENSMUSG00000035493">
    <property type="expression patterns" value="Expressed in substantia propria of cornea and 382 other cell types or tissues"/>
</dbReference>
<dbReference type="ExpressionAtlas" id="P82198">
    <property type="expression patterns" value="baseline and differential"/>
</dbReference>
<dbReference type="GO" id="GO:0005604">
    <property type="term" value="C:basement membrane"/>
    <property type="evidence" value="ECO:0007669"/>
    <property type="project" value="Ensembl"/>
</dbReference>
<dbReference type="GO" id="GO:0062023">
    <property type="term" value="C:collagen-containing extracellular matrix"/>
    <property type="evidence" value="ECO:0007005"/>
    <property type="project" value="BHF-UCL"/>
</dbReference>
<dbReference type="GO" id="GO:0031012">
    <property type="term" value="C:extracellular matrix"/>
    <property type="evidence" value="ECO:0000314"/>
    <property type="project" value="MGI"/>
</dbReference>
<dbReference type="GO" id="GO:0005615">
    <property type="term" value="C:extracellular space"/>
    <property type="evidence" value="ECO:0000314"/>
    <property type="project" value="MGI"/>
</dbReference>
<dbReference type="GO" id="GO:0005802">
    <property type="term" value="C:trans-Golgi network"/>
    <property type="evidence" value="ECO:0007669"/>
    <property type="project" value="Ensembl"/>
</dbReference>
<dbReference type="GO" id="GO:0005518">
    <property type="term" value="F:collagen binding"/>
    <property type="evidence" value="ECO:0007669"/>
    <property type="project" value="Ensembl"/>
</dbReference>
<dbReference type="GO" id="GO:0050840">
    <property type="term" value="F:extracellular matrix binding"/>
    <property type="evidence" value="ECO:0000314"/>
    <property type="project" value="MGI"/>
</dbReference>
<dbReference type="GO" id="GO:0042802">
    <property type="term" value="F:identical protein binding"/>
    <property type="evidence" value="ECO:0007669"/>
    <property type="project" value="Ensembl"/>
</dbReference>
<dbReference type="GO" id="GO:0001525">
    <property type="term" value="P:angiogenesis"/>
    <property type="evidence" value="ECO:0007669"/>
    <property type="project" value="Ensembl"/>
</dbReference>
<dbReference type="GO" id="GO:0007155">
    <property type="term" value="P:cell adhesion"/>
    <property type="evidence" value="ECO:0000314"/>
    <property type="project" value="MGI"/>
</dbReference>
<dbReference type="GO" id="GO:0002062">
    <property type="term" value="P:chondrocyte differentiation"/>
    <property type="evidence" value="ECO:0007669"/>
    <property type="project" value="Ensembl"/>
</dbReference>
<dbReference type="GO" id="GO:0030198">
    <property type="term" value="P:extracellular matrix organization"/>
    <property type="evidence" value="ECO:0000314"/>
    <property type="project" value="MGI"/>
</dbReference>
<dbReference type="FunFam" id="2.30.180.10:FF:000001">
    <property type="entry name" value="periostin isoform X1"/>
    <property type="match status" value="1"/>
</dbReference>
<dbReference type="FunFam" id="2.30.180.10:FF:000002">
    <property type="entry name" value="periostin isoform X1"/>
    <property type="match status" value="1"/>
</dbReference>
<dbReference type="FunFam" id="2.30.180.10:FF:000003">
    <property type="entry name" value="periostin isoform X1"/>
    <property type="match status" value="1"/>
</dbReference>
<dbReference type="FunFam" id="2.30.180.10:FF:000007">
    <property type="entry name" value="Transforming growth factor-beta-induced protein ig-h3"/>
    <property type="match status" value="1"/>
</dbReference>
<dbReference type="Gene3D" id="2.30.180.10">
    <property type="entry name" value="FAS1 domain"/>
    <property type="match status" value="4"/>
</dbReference>
<dbReference type="InterPro" id="IPR050904">
    <property type="entry name" value="Adhesion/Biosynth-related"/>
</dbReference>
<dbReference type="InterPro" id="IPR011489">
    <property type="entry name" value="EMI_domain"/>
</dbReference>
<dbReference type="InterPro" id="IPR036378">
    <property type="entry name" value="FAS1_dom_sf"/>
</dbReference>
<dbReference type="InterPro" id="IPR000782">
    <property type="entry name" value="FAS1_domain"/>
</dbReference>
<dbReference type="InterPro" id="IPR016666">
    <property type="entry name" value="TGFBI/POSTN"/>
</dbReference>
<dbReference type="PANTHER" id="PTHR10900">
    <property type="entry name" value="PERIOSTIN-RELATED"/>
    <property type="match status" value="1"/>
</dbReference>
<dbReference type="PANTHER" id="PTHR10900:SF82">
    <property type="entry name" value="TRANSFORMING GROWTH FACTOR-BETA-INDUCED PROTEIN IG-H3"/>
    <property type="match status" value="1"/>
</dbReference>
<dbReference type="Pfam" id="PF02469">
    <property type="entry name" value="Fasciclin"/>
    <property type="match status" value="4"/>
</dbReference>
<dbReference type="PIRSF" id="PIRSF016553">
    <property type="entry name" value="BIGH3_OSF2"/>
    <property type="match status" value="1"/>
</dbReference>
<dbReference type="SMART" id="SM00554">
    <property type="entry name" value="FAS1"/>
    <property type="match status" value="4"/>
</dbReference>
<dbReference type="SUPFAM" id="SSF82153">
    <property type="entry name" value="FAS1 domain"/>
    <property type="match status" value="4"/>
</dbReference>
<dbReference type="PROSITE" id="PS51041">
    <property type="entry name" value="EMI"/>
    <property type="match status" value="1"/>
</dbReference>
<dbReference type="PROSITE" id="PS50213">
    <property type="entry name" value="FAS1"/>
    <property type="match status" value="4"/>
</dbReference>
<reference key="1">
    <citation type="journal article" date="1994" name="DNA Cell Biol.">
        <title>Beta ig-h3: a transforming growth factor-beta-responsive gene encoding a secreted protein that inhibits cell attachment in vitro and suppresses the growth of CHO cells in nude mice.</title>
        <authorList>
            <person name="Skonier J."/>
            <person name="Bennett K."/>
            <person name="Rothwell V."/>
            <person name="Kosowski S."/>
            <person name="Plowman G."/>
            <person name="Wallace P."/>
            <person name="Edelhoff S."/>
            <person name="Disteche C.M."/>
            <person name="Neubauer M."/>
            <person name="Marquardt H."/>
            <person name="Rodgers J."/>
            <person name="Purchio A.F."/>
        </authorList>
    </citation>
    <scope>NUCLEOTIDE SEQUENCE [MRNA]</scope>
    <scope>TISSUE SPECIFICITY</scope>
    <scope>DEVELOPMENTAL STAGE</scope>
    <source>
        <strain>G8</strain>
    </source>
</reference>
<reference key="2">
    <citation type="journal article" date="2005" name="Science">
        <title>The transcriptional landscape of the mammalian genome.</title>
        <authorList>
            <person name="Carninci P."/>
            <person name="Kasukawa T."/>
            <person name="Katayama S."/>
            <person name="Gough J."/>
            <person name="Frith M.C."/>
            <person name="Maeda N."/>
            <person name="Oyama R."/>
            <person name="Ravasi T."/>
            <person name="Lenhard B."/>
            <person name="Wells C."/>
            <person name="Kodzius R."/>
            <person name="Shimokawa K."/>
            <person name="Bajic V.B."/>
            <person name="Brenner S.E."/>
            <person name="Batalov S."/>
            <person name="Forrest A.R."/>
            <person name="Zavolan M."/>
            <person name="Davis M.J."/>
            <person name="Wilming L.G."/>
            <person name="Aidinis V."/>
            <person name="Allen J.E."/>
            <person name="Ambesi-Impiombato A."/>
            <person name="Apweiler R."/>
            <person name="Aturaliya R.N."/>
            <person name="Bailey T.L."/>
            <person name="Bansal M."/>
            <person name="Baxter L."/>
            <person name="Beisel K.W."/>
            <person name="Bersano T."/>
            <person name="Bono H."/>
            <person name="Chalk A.M."/>
            <person name="Chiu K.P."/>
            <person name="Choudhary V."/>
            <person name="Christoffels A."/>
            <person name="Clutterbuck D.R."/>
            <person name="Crowe M.L."/>
            <person name="Dalla E."/>
            <person name="Dalrymple B.P."/>
            <person name="de Bono B."/>
            <person name="Della Gatta G."/>
            <person name="di Bernardo D."/>
            <person name="Down T."/>
            <person name="Engstrom P."/>
            <person name="Fagiolini M."/>
            <person name="Faulkner G."/>
            <person name="Fletcher C.F."/>
            <person name="Fukushima T."/>
            <person name="Furuno M."/>
            <person name="Futaki S."/>
            <person name="Gariboldi M."/>
            <person name="Georgii-Hemming P."/>
            <person name="Gingeras T.R."/>
            <person name="Gojobori T."/>
            <person name="Green R.E."/>
            <person name="Gustincich S."/>
            <person name="Harbers M."/>
            <person name="Hayashi Y."/>
            <person name="Hensch T.K."/>
            <person name="Hirokawa N."/>
            <person name="Hill D."/>
            <person name="Huminiecki L."/>
            <person name="Iacono M."/>
            <person name="Ikeo K."/>
            <person name="Iwama A."/>
            <person name="Ishikawa T."/>
            <person name="Jakt M."/>
            <person name="Kanapin A."/>
            <person name="Katoh M."/>
            <person name="Kawasawa Y."/>
            <person name="Kelso J."/>
            <person name="Kitamura H."/>
            <person name="Kitano H."/>
            <person name="Kollias G."/>
            <person name="Krishnan S.P."/>
            <person name="Kruger A."/>
            <person name="Kummerfeld S.K."/>
            <person name="Kurochkin I.V."/>
            <person name="Lareau L.F."/>
            <person name="Lazarevic D."/>
            <person name="Lipovich L."/>
            <person name="Liu J."/>
            <person name="Liuni S."/>
            <person name="McWilliam S."/>
            <person name="Madan Babu M."/>
            <person name="Madera M."/>
            <person name="Marchionni L."/>
            <person name="Matsuda H."/>
            <person name="Matsuzawa S."/>
            <person name="Miki H."/>
            <person name="Mignone F."/>
            <person name="Miyake S."/>
            <person name="Morris K."/>
            <person name="Mottagui-Tabar S."/>
            <person name="Mulder N."/>
            <person name="Nakano N."/>
            <person name="Nakauchi H."/>
            <person name="Ng P."/>
            <person name="Nilsson R."/>
            <person name="Nishiguchi S."/>
            <person name="Nishikawa S."/>
            <person name="Nori F."/>
            <person name="Ohara O."/>
            <person name="Okazaki Y."/>
            <person name="Orlando V."/>
            <person name="Pang K.C."/>
            <person name="Pavan W.J."/>
            <person name="Pavesi G."/>
            <person name="Pesole G."/>
            <person name="Petrovsky N."/>
            <person name="Piazza S."/>
            <person name="Reed J."/>
            <person name="Reid J.F."/>
            <person name="Ring B.Z."/>
            <person name="Ringwald M."/>
            <person name="Rost B."/>
            <person name="Ruan Y."/>
            <person name="Salzberg S.L."/>
            <person name="Sandelin A."/>
            <person name="Schneider C."/>
            <person name="Schoenbach C."/>
            <person name="Sekiguchi K."/>
            <person name="Semple C.A."/>
            <person name="Seno S."/>
            <person name="Sessa L."/>
            <person name="Sheng Y."/>
            <person name="Shibata Y."/>
            <person name="Shimada H."/>
            <person name="Shimada K."/>
            <person name="Silva D."/>
            <person name="Sinclair B."/>
            <person name="Sperling S."/>
            <person name="Stupka E."/>
            <person name="Sugiura K."/>
            <person name="Sultana R."/>
            <person name="Takenaka Y."/>
            <person name="Taki K."/>
            <person name="Tammoja K."/>
            <person name="Tan S.L."/>
            <person name="Tang S."/>
            <person name="Taylor M.S."/>
            <person name="Tegner J."/>
            <person name="Teichmann S.A."/>
            <person name="Ueda H.R."/>
            <person name="van Nimwegen E."/>
            <person name="Verardo R."/>
            <person name="Wei C.L."/>
            <person name="Yagi K."/>
            <person name="Yamanishi H."/>
            <person name="Zabarovsky E."/>
            <person name="Zhu S."/>
            <person name="Zimmer A."/>
            <person name="Hide W."/>
            <person name="Bult C."/>
            <person name="Grimmond S.M."/>
            <person name="Teasdale R.D."/>
            <person name="Liu E.T."/>
            <person name="Brusic V."/>
            <person name="Quackenbush J."/>
            <person name="Wahlestedt C."/>
            <person name="Mattick J.S."/>
            <person name="Hume D.A."/>
            <person name="Kai C."/>
            <person name="Sasaki D."/>
            <person name="Tomaru Y."/>
            <person name="Fukuda S."/>
            <person name="Kanamori-Katayama M."/>
            <person name="Suzuki M."/>
            <person name="Aoki J."/>
            <person name="Arakawa T."/>
            <person name="Iida J."/>
            <person name="Imamura K."/>
            <person name="Itoh M."/>
            <person name="Kato T."/>
            <person name="Kawaji H."/>
            <person name="Kawagashira N."/>
            <person name="Kawashima T."/>
            <person name="Kojima M."/>
            <person name="Kondo S."/>
            <person name="Konno H."/>
            <person name="Nakano K."/>
            <person name="Ninomiya N."/>
            <person name="Nishio T."/>
            <person name="Okada M."/>
            <person name="Plessy C."/>
            <person name="Shibata K."/>
            <person name="Shiraki T."/>
            <person name="Suzuki S."/>
            <person name="Tagami M."/>
            <person name="Waki K."/>
            <person name="Watahiki A."/>
            <person name="Okamura-Oho Y."/>
            <person name="Suzuki H."/>
            <person name="Kawai J."/>
            <person name="Hayashizaki Y."/>
        </authorList>
    </citation>
    <scope>NUCLEOTIDE SEQUENCE [LARGE SCALE MRNA]</scope>
    <source>
        <strain>C57BL/6J</strain>
        <strain>NOD</strain>
        <tissue>Bone marrow</tissue>
        <tissue>Eye</tissue>
        <tissue>Heart</tissue>
    </source>
</reference>
<reference key="3">
    <citation type="journal article" date="2010" name="Cell">
        <title>A tissue-specific atlas of mouse protein phosphorylation and expression.</title>
        <authorList>
            <person name="Huttlin E.L."/>
            <person name="Jedrychowski M.P."/>
            <person name="Elias J.E."/>
            <person name="Goswami T."/>
            <person name="Rad R."/>
            <person name="Beausoleil S.A."/>
            <person name="Villen J."/>
            <person name="Haas W."/>
            <person name="Sowa M.E."/>
            <person name="Gygi S.P."/>
        </authorList>
    </citation>
    <scope>IDENTIFICATION BY MASS SPECTROMETRY [LARGE SCALE ANALYSIS]</scope>
    <source>
        <tissue>Brown adipose tissue</tissue>
        <tissue>Heart</tissue>
        <tissue>Kidney</tissue>
    </source>
</reference>
<feature type="signal peptide" evidence="2">
    <location>
        <begin position="1"/>
        <end position="23"/>
    </location>
</feature>
<feature type="chain" id="PRO_0000041980" description="Transforming growth factor-beta-induced protein ig-h3">
    <location>
        <begin position="24"/>
        <end position="683"/>
    </location>
</feature>
<feature type="domain" description="EMI" evidence="5">
    <location>
        <begin position="45"/>
        <end position="99"/>
    </location>
</feature>
<feature type="domain" description="FAS1 1" evidence="4">
    <location>
        <begin position="103"/>
        <end position="236"/>
    </location>
</feature>
<feature type="domain" description="FAS1 2" evidence="4">
    <location>
        <begin position="240"/>
        <end position="371"/>
    </location>
</feature>
<feature type="domain" description="FAS1 3" evidence="4">
    <location>
        <begin position="375"/>
        <end position="498"/>
    </location>
</feature>
<feature type="domain" description="FAS1 4" evidence="4">
    <location>
        <begin position="502"/>
        <end position="632"/>
    </location>
</feature>
<feature type="short sequence motif" description="Cell attachment site" evidence="3">
    <location>
        <begin position="642"/>
        <end position="644"/>
    </location>
</feature>
<feature type="modified residue" description="Phosphoserine" evidence="2">
    <location>
        <position position="37"/>
    </location>
</feature>
<feature type="modified residue" description="S-cysteinyl cysteine" evidence="2">
    <location>
        <position position="65"/>
    </location>
</feature>
<feature type="disulfide bond" evidence="2">
    <location>
        <begin position="49"/>
        <end position="85"/>
    </location>
</feature>
<feature type="disulfide bond" evidence="2">
    <location>
        <begin position="74"/>
        <end position="339"/>
    </location>
</feature>
<feature type="disulfide bond" evidence="2">
    <location>
        <begin position="84"/>
        <end position="97"/>
    </location>
</feature>
<feature type="disulfide bond" evidence="2">
    <location>
        <begin position="214"/>
        <end position="317"/>
    </location>
</feature>
<feature type="disulfide bond" evidence="2">
    <location>
        <begin position="473"/>
        <end position="478"/>
    </location>
</feature>
<comment type="function">
    <text evidence="1 6">Plays a role in cell adhesion (PubMed:8024701). May play a role in cell-collagen interactions (By similarity).</text>
</comment>
<comment type="subunit">
    <text evidence="1">Binds to type I, II, and IV collagens.</text>
</comment>
<comment type="subcellular location">
    <subcellularLocation>
        <location evidence="2">Secreted</location>
    </subcellularLocation>
    <subcellularLocation>
        <location evidence="2">Secreted</location>
        <location evidence="2">Extracellular space</location>
        <location evidence="2">Extracellular matrix</location>
    </subcellularLocation>
    <text evidence="2">May be associated both with microfibrils and with the cell surface.</text>
</comment>
<comment type="tissue specificity">
    <text evidence="6">Expressed in heart, kidney, liver, skeletal muscle, testis, thyroid and uterus (PubMed:8024701).</text>
</comment>
<comment type="developmental stage">
    <text evidence="6">Expressed in the embryo at 12 dpc (PubMed:8024701).</text>
</comment>
<comment type="PTM">
    <text evidence="2">Gamma-carboxylation is controversial. Gamma-carboxyglutamated; gamma-carboxyglutamate residues are formed by vitamin K dependent carboxylation; this may be required for calcium binding. According to a more recent report, does not contain vitamin K-dependent gamma-carboxyglutamate residues.</text>
</comment>
<comment type="PTM">
    <text evidence="2">The EMI domain contains 2 expected intradomain disulfide bridges (Cys-49-Cys85 and Cys-84-Cys-97) and one unusual interdomain disulfide bridge to the second FAS1 domain (Cys-74-Cys-339). This arrangement violates the predicted disulfide bridge pattern of an EMI domain.</text>
</comment>
<keyword id="KW-0130">Cell adhesion</keyword>
<keyword id="KW-1015">Disulfide bond</keyword>
<keyword id="KW-0272">Extracellular matrix</keyword>
<keyword id="KW-0301">Gamma-carboxyglutamic acid</keyword>
<keyword id="KW-0597">Phosphoprotein</keyword>
<keyword id="KW-1185">Reference proteome</keyword>
<keyword id="KW-0677">Repeat</keyword>
<keyword id="KW-0964">Secreted</keyword>
<keyword id="KW-0732">Signal</keyword>
<gene>
    <name type="primary">Tgfbi</name>
</gene>
<organism>
    <name type="scientific">Mus musculus</name>
    <name type="common">Mouse</name>
    <dbReference type="NCBI Taxonomy" id="10090"/>
    <lineage>
        <taxon>Eukaryota</taxon>
        <taxon>Metazoa</taxon>
        <taxon>Chordata</taxon>
        <taxon>Craniata</taxon>
        <taxon>Vertebrata</taxon>
        <taxon>Euteleostomi</taxon>
        <taxon>Mammalia</taxon>
        <taxon>Eutheria</taxon>
        <taxon>Euarchontoglires</taxon>
        <taxon>Glires</taxon>
        <taxon>Rodentia</taxon>
        <taxon>Myomorpha</taxon>
        <taxon>Muroidea</taxon>
        <taxon>Muridae</taxon>
        <taxon>Murinae</taxon>
        <taxon>Mus</taxon>
        <taxon>Mus</taxon>
    </lineage>
</organism>
<proteinExistence type="evidence at protein level"/>
<sequence>MALLMRLLTLALALSVGPAGTLAGPAKSPYQLVLQHSRLRGRQHGPNVCAVQKVIGTNKKYFTNCKQWYQRKICGKSTVISYECCPGYEKVPGEKGCPAALPLSNLYETMGVVGSTTTQLYTDRTEKLRPEMEGPGSFTIFAPSNEAWSSLPAEVLDSLVSNVNIELLNALRYHMVDRRVLTDELKHGMTLTSMYQNSNIQIHHYPNGIVTVNCARLLKADHHATNGVVHLIDKVISTITNNIQQIIEIEDTFETLRAAVAASGLNTVLEGDGQFTLLAPTNEAFEKIPAETLNRILGDPEALRDLLNNHILKSAMCAEAIVAGMSMETLGGTTLEVGCSGDKLTINGKAVISNKDILATNGVIHFIDELLIPDSAKTLLELAGESDVSTAIDILKQAGLDTHLSGKEQLTFLAPLNSVFKDGVPRIDAQMKTLLLNHMVKEQLASKYLYSGQTLDTLGGKKLRVFVYRNSLCIENSCIAAHDKRGRFGTLFTMDRMLTPPMGTVMDVLKGDNRFSMLVAAIQSAGLMEILNREGVYTVFAPTNEAFQAMPPEELNKLLANAKELTNILKYHIGDEILVSGGIGALVRLKSLQGDKLEVSSKNNVVSVNKEPVAETDIMATNGVVYAINTVLQPPANRPQERGDELADSALEIFKQASAYSRAAQRSVRLAPVYQRLLERMKH</sequence>
<protein>
    <recommendedName>
        <fullName>Transforming growth factor-beta-induced protein ig-h3</fullName>
        <shortName>Beta ig-h3</shortName>
    </recommendedName>
</protein>
<name>BGH3_MOUSE</name>
<accession>P82198</accession>
<accession>Q3U9R1</accession>
<evidence type="ECO:0000250" key="1">
    <source>
        <dbReference type="UniProtKB" id="O11780"/>
    </source>
</evidence>
<evidence type="ECO:0000250" key="2">
    <source>
        <dbReference type="UniProtKB" id="Q15582"/>
    </source>
</evidence>
<evidence type="ECO:0000255" key="3"/>
<evidence type="ECO:0000255" key="4">
    <source>
        <dbReference type="PROSITE-ProRule" id="PRU00082"/>
    </source>
</evidence>
<evidence type="ECO:0000255" key="5">
    <source>
        <dbReference type="PROSITE-ProRule" id="PRU00384"/>
    </source>
</evidence>
<evidence type="ECO:0000269" key="6">
    <source>
    </source>
</evidence>